<comment type="subcellular location">
    <subcellularLocation>
        <location evidence="3">Cell membrane</location>
        <topology evidence="3">Multi-pass membrane protein</topology>
    </subcellularLocation>
</comment>
<keyword id="KW-1003">Cell membrane</keyword>
<keyword id="KW-0472">Membrane</keyword>
<keyword id="KW-1185">Reference proteome</keyword>
<keyword id="KW-0812">Transmembrane</keyword>
<keyword id="KW-1133">Transmembrane helix</keyword>
<evidence type="ECO:0000255" key="1"/>
<evidence type="ECO:0000255" key="2">
    <source>
        <dbReference type="PROSITE-ProRule" id="PRU00060"/>
    </source>
</evidence>
<evidence type="ECO:0000305" key="3"/>
<feature type="chain" id="PRO_0000427360" description="Uncharacterized protein MT0113">
    <location>
        <begin position="1"/>
        <end position="504"/>
    </location>
</feature>
<feature type="transmembrane region" description="Helical" evidence="1">
    <location>
        <begin position="146"/>
        <end position="166"/>
    </location>
</feature>
<feature type="transmembrane region" description="Helical" evidence="1">
    <location>
        <begin position="196"/>
        <end position="216"/>
    </location>
</feature>
<feature type="transmembrane region" description="Helical" evidence="1">
    <location>
        <begin position="330"/>
        <end position="350"/>
    </location>
</feature>
<feature type="binding site" evidence="2">
    <location>
        <begin position="372"/>
        <end position="492"/>
    </location>
    <ligand>
        <name>a nucleoside 3',5'-cyclic phosphate</name>
        <dbReference type="ChEBI" id="CHEBI:58464"/>
    </ligand>
</feature>
<organism>
    <name type="scientific">Mycobacterium tuberculosis (strain CDC 1551 / Oshkosh)</name>
    <dbReference type="NCBI Taxonomy" id="83331"/>
    <lineage>
        <taxon>Bacteria</taxon>
        <taxon>Bacillati</taxon>
        <taxon>Actinomycetota</taxon>
        <taxon>Actinomycetes</taxon>
        <taxon>Mycobacteriales</taxon>
        <taxon>Mycobacteriaceae</taxon>
        <taxon>Mycobacterium</taxon>
        <taxon>Mycobacterium tuberculosis complex</taxon>
    </lineage>
</organism>
<dbReference type="EMBL" id="AE000516">
    <property type="protein sequence ID" value="AAK44335.1"/>
    <property type="molecule type" value="Genomic_DNA"/>
</dbReference>
<dbReference type="PIR" id="H70751">
    <property type="entry name" value="H70751"/>
</dbReference>
<dbReference type="RefSeq" id="WP_003899813.1">
    <property type="nucleotide sequence ID" value="NZ_KK341227.1"/>
</dbReference>
<dbReference type="SMR" id="P9WM60"/>
<dbReference type="KEGG" id="mtc:MT0113"/>
<dbReference type="PATRIC" id="fig|83331.31.peg.118"/>
<dbReference type="HOGENOM" id="CLU_041783_0_0_11"/>
<dbReference type="Proteomes" id="UP000001020">
    <property type="component" value="Chromosome"/>
</dbReference>
<dbReference type="GO" id="GO:0005829">
    <property type="term" value="C:cytosol"/>
    <property type="evidence" value="ECO:0007669"/>
    <property type="project" value="TreeGrafter"/>
</dbReference>
<dbReference type="GO" id="GO:0005886">
    <property type="term" value="C:plasma membrane"/>
    <property type="evidence" value="ECO:0007669"/>
    <property type="project" value="UniProtKB-SubCell"/>
</dbReference>
<dbReference type="GO" id="GO:0003700">
    <property type="term" value="F:DNA-binding transcription factor activity"/>
    <property type="evidence" value="ECO:0007669"/>
    <property type="project" value="TreeGrafter"/>
</dbReference>
<dbReference type="CDD" id="cd00038">
    <property type="entry name" value="CAP_ED"/>
    <property type="match status" value="1"/>
</dbReference>
<dbReference type="Gene3D" id="3.40.50.1480">
    <property type="entry name" value="Adenosylhomocysteinase-like"/>
    <property type="match status" value="1"/>
</dbReference>
<dbReference type="Gene3D" id="2.60.120.10">
    <property type="entry name" value="Jelly Rolls"/>
    <property type="match status" value="1"/>
</dbReference>
<dbReference type="InterPro" id="IPR042172">
    <property type="entry name" value="Adenosylhomocyst_ase-like_sf"/>
</dbReference>
<dbReference type="InterPro" id="IPR000595">
    <property type="entry name" value="cNMP-bd_dom"/>
</dbReference>
<dbReference type="InterPro" id="IPR018490">
    <property type="entry name" value="cNMP-bd_dom_sf"/>
</dbReference>
<dbReference type="InterPro" id="IPR050397">
    <property type="entry name" value="Env_Response_Regulators"/>
</dbReference>
<dbReference type="InterPro" id="IPR036291">
    <property type="entry name" value="NAD(P)-bd_dom_sf"/>
</dbReference>
<dbReference type="InterPro" id="IPR014710">
    <property type="entry name" value="RmlC-like_jellyroll"/>
</dbReference>
<dbReference type="PANTHER" id="PTHR24567">
    <property type="entry name" value="CRP FAMILY TRANSCRIPTIONAL REGULATORY PROTEIN"/>
    <property type="match status" value="1"/>
</dbReference>
<dbReference type="PANTHER" id="PTHR24567:SF74">
    <property type="entry name" value="HTH-TYPE TRANSCRIPTIONAL REGULATOR ARCR"/>
    <property type="match status" value="1"/>
</dbReference>
<dbReference type="Pfam" id="PF00027">
    <property type="entry name" value="cNMP_binding"/>
    <property type="match status" value="1"/>
</dbReference>
<dbReference type="SMART" id="SM00100">
    <property type="entry name" value="cNMP"/>
    <property type="match status" value="1"/>
</dbReference>
<dbReference type="SUPFAM" id="SSF51206">
    <property type="entry name" value="cAMP-binding domain-like"/>
    <property type="match status" value="1"/>
</dbReference>
<dbReference type="SUPFAM" id="SSF52283">
    <property type="entry name" value="Formate/glycerate dehydrogenase catalytic domain-like"/>
    <property type="match status" value="1"/>
</dbReference>
<dbReference type="SUPFAM" id="SSF51735">
    <property type="entry name" value="NAD(P)-binding Rossmann-fold domains"/>
    <property type="match status" value="1"/>
</dbReference>
<dbReference type="PROSITE" id="PS50042">
    <property type="entry name" value="CNMP_BINDING_3"/>
    <property type="match status" value="1"/>
</dbReference>
<sequence>MTPVTTFPLVDAILAGRDRNLDGVILIAAQHLLQTTHAMLRSLFRVGLDPRNVAVIGKCYSTHPGVVDAMRADGIYVDDCSDAYAPHESFDTQYTRHVERFFAESWARLTAGRTARVVLLDDGGSLLAVAGAMLDASADVIGIEQTSAGYAKIVGCALGFPVINIARSSAKLLYESPIIAARVTQTAFERTAGIDSSAAILITGAGAIGTALADVLRPLHDRVDVYDTRSGCMTPIDLPNAIGGYDVIIGATGATSVPASMHELLRPGVLLMSASSSDREFDAVALRRRTTPNPDCHADLRVADGSVDATLLNSGFPVNFDGSPMCGDASMALTMALLAAAVLYASVAVADEMSSDHPHLGLIDQGDIVASFLNIDVPLQALSRLPLLSIDGYRRLQVRSGYTLFRQGERADHFFVIESGELEALVDGKVILRLGAGDHFGEACLLGGMRRIATVRACEPSVLWELDGKAFGDALHGDAAMREIAYGVARTRLMHAGASESLMV</sequence>
<proteinExistence type="predicted"/>
<name>Y104_MYCTO</name>
<accession>P9WM60</accession>
<accession>L0T2G9</accession>
<accession>Q10898</accession>
<reference key="1">
    <citation type="journal article" date="2002" name="J. Bacteriol.">
        <title>Whole-genome comparison of Mycobacterium tuberculosis clinical and laboratory strains.</title>
        <authorList>
            <person name="Fleischmann R.D."/>
            <person name="Alland D."/>
            <person name="Eisen J.A."/>
            <person name="Carpenter L."/>
            <person name="White O."/>
            <person name="Peterson J.D."/>
            <person name="DeBoy R.T."/>
            <person name="Dodson R.J."/>
            <person name="Gwinn M.L."/>
            <person name="Haft D.H."/>
            <person name="Hickey E.K."/>
            <person name="Kolonay J.F."/>
            <person name="Nelson W.C."/>
            <person name="Umayam L.A."/>
            <person name="Ermolaeva M.D."/>
            <person name="Salzberg S.L."/>
            <person name="Delcher A."/>
            <person name="Utterback T.R."/>
            <person name="Weidman J.F."/>
            <person name="Khouri H.M."/>
            <person name="Gill J."/>
            <person name="Mikula A."/>
            <person name="Bishai W."/>
            <person name="Jacobs W.R. Jr."/>
            <person name="Venter J.C."/>
            <person name="Fraser C.M."/>
        </authorList>
    </citation>
    <scope>NUCLEOTIDE SEQUENCE [LARGE SCALE GENOMIC DNA]</scope>
    <source>
        <strain>CDC 1551 / Oshkosh</strain>
    </source>
</reference>
<gene>
    <name type="ordered locus">MT0113</name>
</gene>
<protein>
    <recommendedName>
        <fullName>Uncharacterized protein MT0113</fullName>
    </recommendedName>
</protein>